<organism>
    <name type="scientific">Pyrobaculum arsenaticum (strain DSM 13514 / JCM 11321 / PZ6)</name>
    <dbReference type="NCBI Taxonomy" id="340102"/>
    <lineage>
        <taxon>Archaea</taxon>
        <taxon>Thermoproteota</taxon>
        <taxon>Thermoprotei</taxon>
        <taxon>Thermoproteales</taxon>
        <taxon>Thermoproteaceae</taxon>
        <taxon>Pyrobaculum</taxon>
    </lineage>
</organism>
<evidence type="ECO:0000255" key="1">
    <source>
        <dbReference type="HAMAP-Rule" id="MF_00383"/>
    </source>
</evidence>
<evidence type="ECO:0000255" key="2">
    <source>
        <dbReference type="PROSITE-ProRule" id="PRU00469"/>
    </source>
</evidence>
<proteinExistence type="inferred from homology"/>
<comment type="function">
    <text evidence="1">Stabilizes TBP binding to an archaeal box-A promoter. Also responsible for recruiting RNA polymerase II to the pre-initiation complex (DNA-TBP-TFIIB).</text>
</comment>
<comment type="similarity">
    <text evidence="1">Belongs to the TFIIB family.</text>
</comment>
<accession>A4WMA6</accession>
<keyword id="KW-0479">Metal-binding</keyword>
<keyword id="KW-0677">Repeat</keyword>
<keyword id="KW-0804">Transcription</keyword>
<keyword id="KW-0805">Transcription regulation</keyword>
<keyword id="KW-0862">Zinc</keyword>
<keyword id="KW-0863">Zinc-finger</keyword>
<reference key="1">
    <citation type="submission" date="2007-04" db="EMBL/GenBank/DDBJ databases">
        <title>Complete sequence of Pyrobaculum arsenaticum DSM 13514.</title>
        <authorList>
            <consortium name="US DOE Joint Genome Institute"/>
            <person name="Copeland A."/>
            <person name="Lucas S."/>
            <person name="Lapidus A."/>
            <person name="Barry K."/>
            <person name="Glavina del Rio T."/>
            <person name="Dalin E."/>
            <person name="Tice H."/>
            <person name="Pitluck S."/>
            <person name="Chain P."/>
            <person name="Malfatti S."/>
            <person name="Shin M."/>
            <person name="Vergez L."/>
            <person name="Schmutz J."/>
            <person name="Larimer F."/>
            <person name="Land M."/>
            <person name="Hauser L."/>
            <person name="Kyrpides N."/>
            <person name="Mikhailova N."/>
            <person name="Cozen A.E."/>
            <person name="Fitz-Gibbon S.T."/>
            <person name="House C.H."/>
            <person name="Saltikov C."/>
            <person name="Lowe T.M."/>
            <person name="Richardson P."/>
        </authorList>
    </citation>
    <scope>NUCLEOTIDE SEQUENCE [LARGE SCALE GENOMIC DNA]</scope>
    <source>
        <strain>ATCC 700994 / DSM 13514 / JCM 11321 / PZ6</strain>
    </source>
</reference>
<name>TF2B_PYRAR</name>
<gene>
    <name evidence="1" type="primary">tfb</name>
    <name type="ordered locus">Pars_1976</name>
</gene>
<dbReference type="EMBL" id="CP000660">
    <property type="protein sequence ID" value="ABP51523.1"/>
    <property type="molecule type" value="Genomic_DNA"/>
</dbReference>
<dbReference type="SMR" id="A4WMA6"/>
<dbReference type="STRING" id="340102.Pars_1976"/>
<dbReference type="KEGG" id="pas:Pars_1976"/>
<dbReference type="HOGENOM" id="CLU_043736_0_1_2"/>
<dbReference type="OrthoDB" id="7429at2157"/>
<dbReference type="PhylomeDB" id="A4WMA6"/>
<dbReference type="Proteomes" id="UP000001567">
    <property type="component" value="Chromosome"/>
</dbReference>
<dbReference type="GO" id="GO:0097550">
    <property type="term" value="C:transcription preinitiation complex"/>
    <property type="evidence" value="ECO:0007669"/>
    <property type="project" value="TreeGrafter"/>
</dbReference>
<dbReference type="GO" id="GO:0003700">
    <property type="term" value="F:DNA-binding transcription factor activity"/>
    <property type="evidence" value="ECO:0007669"/>
    <property type="project" value="UniProtKB-UniRule"/>
</dbReference>
<dbReference type="GO" id="GO:0017025">
    <property type="term" value="F:TBP-class protein binding"/>
    <property type="evidence" value="ECO:0007669"/>
    <property type="project" value="InterPro"/>
</dbReference>
<dbReference type="GO" id="GO:0008270">
    <property type="term" value="F:zinc ion binding"/>
    <property type="evidence" value="ECO:0007669"/>
    <property type="project" value="UniProtKB-UniRule"/>
</dbReference>
<dbReference type="GO" id="GO:0070897">
    <property type="term" value="P:transcription preinitiation complex assembly"/>
    <property type="evidence" value="ECO:0007669"/>
    <property type="project" value="InterPro"/>
</dbReference>
<dbReference type="CDD" id="cd20549">
    <property type="entry name" value="CYCLIN_TFIIB_archaea_like_rpt1"/>
    <property type="match status" value="1"/>
</dbReference>
<dbReference type="CDD" id="cd20550">
    <property type="entry name" value="CYCLIN_TFIIB_archaea_like_rpt2"/>
    <property type="match status" value="1"/>
</dbReference>
<dbReference type="FunFam" id="1.10.472.10:FF:000023">
    <property type="entry name" value="Transcription initiation factor IIB"/>
    <property type="match status" value="1"/>
</dbReference>
<dbReference type="FunFam" id="1.10.472.170:FF:000001">
    <property type="entry name" value="Transcription initiation factor IIB"/>
    <property type="match status" value="1"/>
</dbReference>
<dbReference type="Gene3D" id="1.10.472.170">
    <property type="match status" value="1"/>
</dbReference>
<dbReference type="Gene3D" id="1.10.472.10">
    <property type="entry name" value="Cyclin-like"/>
    <property type="match status" value="1"/>
</dbReference>
<dbReference type="HAMAP" id="MF_00383">
    <property type="entry name" value="TF2B_arch"/>
    <property type="match status" value="1"/>
</dbReference>
<dbReference type="InterPro" id="IPR013763">
    <property type="entry name" value="Cyclin-like_dom"/>
</dbReference>
<dbReference type="InterPro" id="IPR036915">
    <property type="entry name" value="Cyclin-like_sf"/>
</dbReference>
<dbReference type="InterPro" id="IPR000812">
    <property type="entry name" value="TFIIB"/>
</dbReference>
<dbReference type="InterPro" id="IPR023484">
    <property type="entry name" value="TFIIB_arc"/>
</dbReference>
<dbReference type="InterPro" id="IPR023486">
    <property type="entry name" value="TFIIB_CS"/>
</dbReference>
<dbReference type="InterPro" id="IPR013150">
    <property type="entry name" value="TFIIB_cyclin"/>
</dbReference>
<dbReference type="InterPro" id="IPR013137">
    <property type="entry name" value="Znf_TFIIB"/>
</dbReference>
<dbReference type="NCBIfam" id="NF001658">
    <property type="entry name" value="PRK00423.1"/>
    <property type="match status" value="1"/>
</dbReference>
<dbReference type="PANTHER" id="PTHR11618:SF13">
    <property type="entry name" value="TRANSCRIPTION INITIATION FACTOR IIB"/>
    <property type="match status" value="1"/>
</dbReference>
<dbReference type="PANTHER" id="PTHR11618">
    <property type="entry name" value="TRANSCRIPTION INITIATION FACTOR IIB-RELATED"/>
    <property type="match status" value="1"/>
</dbReference>
<dbReference type="Pfam" id="PF00382">
    <property type="entry name" value="TFIIB"/>
    <property type="match status" value="2"/>
</dbReference>
<dbReference type="Pfam" id="PF08271">
    <property type="entry name" value="Zn_Ribbon_TF"/>
    <property type="match status" value="1"/>
</dbReference>
<dbReference type="PRINTS" id="PR00685">
    <property type="entry name" value="TIFACTORIIB"/>
</dbReference>
<dbReference type="SMART" id="SM00385">
    <property type="entry name" value="CYCLIN"/>
    <property type="match status" value="2"/>
</dbReference>
<dbReference type="SUPFAM" id="SSF47954">
    <property type="entry name" value="Cyclin-like"/>
    <property type="match status" value="2"/>
</dbReference>
<dbReference type="SUPFAM" id="SSF57783">
    <property type="entry name" value="Zinc beta-ribbon"/>
    <property type="match status" value="1"/>
</dbReference>
<dbReference type="PROSITE" id="PS00782">
    <property type="entry name" value="TFIIB"/>
    <property type="match status" value="2"/>
</dbReference>
<dbReference type="PROSITE" id="PS51134">
    <property type="entry name" value="ZF_TFIIB"/>
    <property type="match status" value="1"/>
</dbReference>
<protein>
    <recommendedName>
        <fullName evidence="1">Transcription initiation factor IIB</fullName>
        <shortName evidence="1">TFIIB</shortName>
    </recommendedName>
</protein>
<sequence>MSSTSLPSSGKPLKLRINRDSEGYLSLVTESGEIYRCPICGNDRFVYNYERGEVVCIVCGAVVQEQLLDLGPEWRAFTSEEKGQRARTGAPLTRLISEALTTVIDWRDKDVSGRELDIKRKLEVIRLRKWQTRARVQTSYERNFIQAAQELERLKSSMGVPRPCVEQALEIYRQALEKELVRGRSVEAMAAAALYMACRMMRMPRPLDELVRYTKASRREVARCYRLLLRELNVKVPISDPVLYISRIAEQLKLSGEVVKAAIDILQRAKKAGITAGKDPAGLAAAAVYIASLMHGDNRTQKDFAVAAGVTEVTVRNRYKELAKALNIKVPVK</sequence>
<feature type="chain" id="PRO_1000080115" description="Transcription initiation factor IIB">
    <location>
        <begin position="1"/>
        <end position="333"/>
    </location>
</feature>
<feature type="repeat" description="1">
    <location>
        <begin position="149"/>
        <end position="232"/>
    </location>
</feature>
<feature type="repeat" description="2">
    <location>
        <begin position="243"/>
        <end position="324"/>
    </location>
</feature>
<feature type="zinc finger region" description="TFIIB-type" evidence="2">
    <location>
        <begin position="33"/>
        <end position="64"/>
    </location>
</feature>
<feature type="binding site" evidence="2">
    <location>
        <position position="37"/>
    </location>
    <ligand>
        <name>Zn(2+)</name>
        <dbReference type="ChEBI" id="CHEBI:29105"/>
    </ligand>
</feature>
<feature type="binding site" evidence="2">
    <location>
        <position position="40"/>
    </location>
    <ligand>
        <name>Zn(2+)</name>
        <dbReference type="ChEBI" id="CHEBI:29105"/>
    </ligand>
</feature>
<feature type="binding site" evidence="2">
    <location>
        <position position="56"/>
    </location>
    <ligand>
        <name>Zn(2+)</name>
        <dbReference type="ChEBI" id="CHEBI:29105"/>
    </ligand>
</feature>
<feature type="binding site" evidence="2">
    <location>
        <position position="59"/>
    </location>
    <ligand>
        <name>Zn(2+)</name>
        <dbReference type="ChEBI" id="CHEBI:29105"/>
    </ligand>
</feature>